<sequence length="637" mass="69663">MTSTIDKNGAAESRVFEADVAKLLQMMVHSVYSDKDVFLRELISNAADACERLRYEAISDPALLTDETRPRISITIDAERRQLAVEDNGIGMGRDELVDALGTIARSGTKAFIEQAEAAESGDGVALIGQFGVGFYSAFMVADQVDVVSRRAGAREAWRWSSDGKGTFTVTPVDESEAPARGTRVTLHLTEDATGYTDRLKIEQMIKEQSGHVPVPIALIEKPGAEPAEIADGAALWTRPRGEISASEYADFYRSVAGQFDEPALTVHFRAEGRQEFTALLFVPQTRPFDLFEPDKKRQLKLYVRRVFITEDADLLPRYLRFVRGVVDSADLPLNISREMIQESPILAAIKKSITGRILSELEKLADKDAQAYGKIWEAFGPMFKEGIYDAADRRDTVLGLSRFRTTAGSLRSLKDYVGALKENQTSIYYLAGQDAARLEASPHLEGFRARGVEVLLLSDPVDSFWVTSGPSFEGKPFKSVTQGAADLAAIPRLDAGTEPSPDVSEGVTEFLAFLKTTLSDLVSDVRSSDRLTDSPVCLVAAESGPDRQLEKILLGVGQLAGASKPVLEVNPNHPLVASLAALGQDDREFKEDAARMLLDDARVLDGDRPSDALEFSRRLIRLVERGLRRSSAGGGD</sequence>
<feature type="chain" id="PRO_0000224217" description="Chaperone protein HtpG">
    <location>
        <begin position="1"/>
        <end position="637"/>
    </location>
</feature>
<feature type="region of interest" description="A; substrate-binding" evidence="1">
    <location>
        <begin position="1"/>
        <end position="338"/>
    </location>
</feature>
<feature type="region of interest" description="B" evidence="1">
    <location>
        <begin position="339"/>
        <end position="552"/>
    </location>
</feature>
<feature type="region of interest" description="C" evidence="1">
    <location>
        <begin position="553"/>
        <end position="637"/>
    </location>
</feature>
<dbReference type="EMBL" id="CP000115">
    <property type="protein sequence ID" value="ABA06065.1"/>
    <property type="molecule type" value="Genomic_DNA"/>
</dbReference>
<dbReference type="RefSeq" id="WP_011316010.1">
    <property type="nucleotide sequence ID" value="NC_007406.1"/>
</dbReference>
<dbReference type="SMR" id="Q3SNS6"/>
<dbReference type="STRING" id="323098.Nwi_2812"/>
<dbReference type="KEGG" id="nwi:Nwi_2812"/>
<dbReference type="eggNOG" id="COG0326">
    <property type="taxonomic scope" value="Bacteria"/>
</dbReference>
<dbReference type="HOGENOM" id="CLU_006684_3_0_5"/>
<dbReference type="OrthoDB" id="9802640at2"/>
<dbReference type="Proteomes" id="UP000002531">
    <property type="component" value="Chromosome"/>
</dbReference>
<dbReference type="GO" id="GO:0005737">
    <property type="term" value="C:cytoplasm"/>
    <property type="evidence" value="ECO:0007669"/>
    <property type="project" value="UniProtKB-SubCell"/>
</dbReference>
<dbReference type="GO" id="GO:0005524">
    <property type="term" value="F:ATP binding"/>
    <property type="evidence" value="ECO:0007669"/>
    <property type="project" value="UniProtKB-UniRule"/>
</dbReference>
<dbReference type="GO" id="GO:0016887">
    <property type="term" value="F:ATP hydrolysis activity"/>
    <property type="evidence" value="ECO:0007669"/>
    <property type="project" value="InterPro"/>
</dbReference>
<dbReference type="GO" id="GO:0140662">
    <property type="term" value="F:ATP-dependent protein folding chaperone"/>
    <property type="evidence" value="ECO:0007669"/>
    <property type="project" value="InterPro"/>
</dbReference>
<dbReference type="GO" id="GO:0051082">
    <property type="term" value="F:unfolded protein binding"/>
    <property type="evidence" value="ECO:0007669"/>
    <property type="project" value="UniProtKB-UniRule"/>
</dbReference>
<dbReference type="CDD" id="cd16927">
    <property type="entry name" value="HATPase_Hsp90-like"/>
    <property type="match status" value="1"/>
</dbReference>
<dbReference type="FunFam" id="3.30.565.10:FF:000357">
    <property type="entry name" value="Heat shock protein HSP 90-beta"/>
    <property type="match status" value="1"/>
</dbReference>
<dbReference type="Gene3D" id="3.30.230.80">
    <property type="match status" value="1"/>
</dbReference>
<dbReference type="Gene3D" id="3.40.50.11260">
    <property type="match status" value="1"/>
</dbReference>
<dbReference type="Gene3D" id="1.20.120.790">
    <property type="entry name" value="Heat shock protein 90, C-terminal domain"/>
    <property type="match status" value="1"/>
</dbReference>
<dbReference type="Gene3D" id="3.30.565.10">
    <property type="entry name" value="Histidine kinase-like ATPase, C-terminal domain"/>
    <property type="match status" value="1"/>
</dbReference>
<dbReference type="HAMAP" id="MF_00505">
    <property type="entry name" value="HSP90"/>
    <property type="match status" value="1"/>
</dbReference>
<dbReference type="InterPro" id="IPR036890">
    <property type="entry name" value="HATPase_C_sf"/>
</dbReference>
<dbReference type="InterPro" id="IPR019805">
    <property type="entry name" value="Heat_shock_protein_90_CS"/>
</dbReference>
<dbReference type="InterPro" id="IPR037196">
    <property type="entry name" value="HSP90_C"/>
</dbReference>
<dbReference type="InterPro" id="IPR001404">
    <property type="entry name" value="Hsp90_fam"/>
</dbReference>
<dbReference type="InterPro" id="IPR020575">
    <property type="entry name" value="Hsp90_N"/>
</dbReference>
<dbReference type="InterPro" id="IPR020568">
    <property type="entry name" value="Ribosomal_Su5_D2-typ_SF"/>
</dbReference>
<dbReference type="NCBIfam" id="NF003555">
    <property type="entry name" value="PRK05218.1"/>
    <property type="match status" value="1"/>
</dbReference>
<dbReference type="PANTHER" id="PTHR11528">
    <property type="entry name" value="HEAT SHOCK PROTEIN 90 FAMILY MEMBER"/>
    <property type="match status" value="1"/>
</dbReference>
<dbReference type="Pfam" id="PF13589">
    <property type="entry name" value="HATPase_c_3"/>
    <property type="match status" value="1"/>
</dbReference>
<dbReference type="Pfam" id="PF00183">
    <property type="entry name" value="HSP90"/>
    <property type="match status" value="1"/>
</dbReference>
<dbReference type="PIRSF" id="PIRSF002583">
    <property type="entry name" value="Hsp90"/>
    <property type="match status" value="1"/>
</dbReference>
<dbReference type="PRINTS" id="PR00775">
    <property type="entry name" value="HEATSHOCK90"/>
</dbReference>
<dbReference type="SMART" id="SM00387">
    <property type="entry name" value="HATPase_c"/>
    <property type="match status" value="1"/>
</dbReference>
<dbReference type="SUPFAM" id="SSF55874">
    <property type="entry name" value="ATPase domain of HSP90 chaperone/DNA topoisomerase II/histidine kinase"/>
    <property type="match status" value="1"/>
</dbReference>
<dbReference type="SUPFAM" id="SSF110942">
    <property type="entry name" value="HSP90 C-terminal domain"/>
    <property type="match status" value="1"/>
</dbReference>
<dbReference type="SUPFAM" id="SSF54211">
    <property type="entry name" value="Ribosomal protein S5 domain 2-like"/>
    <property type="match status" value="1"/>
</dbReference>
<dbReference type="PROSITE" id="PS00298">
    <property type="entry name" value="HSP90"/>
    <property type="match status" value="1"/>
</dbReference>
<organism>
    <name type="scientific">Nitrobacter winogradskyi (strain ATCC 25391 / DSM 10237 / CIP 104748 / NCIMB 11846 / Nb-255)</name>
    <dbReference type="NCBI Taxonomy" id="323098"/>
    <lineage>
        <taxon>Bacteria</taxon>
        <taxon>Pseudomonadati</taxon>
        <taxon>Pseudomonadota</taxon>
        <taxon>Alphaproteobacteria</taxon>
        <taxon>Hyphomicrobiales</taxon>
        <taxon>Nitrobacteraceae</taxon>
        <taxon>Nitrobacter</taxon>
    </lineage>
</organism>
<accession>Q3SNS6</accession>
<protein>
    <recommendedName>
        <fullName evidence="1">Chaperone protein HtpG</fullName>
    </recommendedName>
    <alternativeName>
        <fullName evidence="1">Heat shock protein HtpG</fullName>
    </alternativeName>
    <alternativeName>
        <fullName evidence="1">High temperature protein G</fullName>
    </alternativeName>
</protein>
<reference key="1">
    <citation type="journal article" date="2006" name="Appl. Environ. Microbiol.">
        <title>Genome sequence of the chemolithoautotrophic nitrite-oxidizing bacterium Nitrobacter winogradskyi Nb-255.</title>
        <authorList>
            <person name="Starkenburg S.R."/>
            <person name="Chain P.S.G."/>
            <person name="Sayavedra-Soto L.A."/>
            <person name="Hauser L."/>
            <person name="Land M.L."/>
            <person name="Larimer F.W."/>
            <person name="Malfatti S.A."/>
            <person name="Klotz M.G."/>
            <person name="Bottomley P.J."/>
            <person name="Arp D.J."/>
            <person name="Hickey W.J."/>
        </authorList>
    </citation>
    <scope>NUCLEOTIDE SEQUENCE [LARGE SCALE GENOMIC DNA]</scope>
    <source>
        <strain>ATCC 25391 / DSM 10237 / CIP 104748 / NCIMB 11846 / Nb-255</strain>
    </source>
</reference>
<name>HTPG_NITWN</name>
<gene>
    <name evidence="1" type="primary">htpG</name>
    <name type="ordered locus">Nwi_2812</name>
</gene>
<keyword id="KW-0067">ATP-binding</keyword>
<keyword id="KW-0143">Chaperone</keyword>
<keyword id="KW-0963">Cytoplasm</keyword>
<keyword id="KW-0547">Nucleotide-binding</keyword>
<keyword id="KW-1185">Reference proteome</keyword>
<keyword id="KW-0346">Stress response</keyword>
<proteinExistence type="inferred from homology"/>
<evidence type="ECO:0000255" key="1">
    <source>
        <dbReference type="HAMAP-Rule" id="MF_00505"/>
    </source>
</evidence>
<comment type="function">
    <text evidence="1">Molecular chaperone. Has ATPase activity.</text>
</comment>
<comment type="subunit">
    <text evidence="1">Homodimer.</text>
</comment>
<comment type="subcellular location">
    <subcellularLocation>
        <location evidence="1">Cytoplasm</location>
    </subcellularLocation>
</comment>
<comment type="similarity">
    <text evidence="1">Belongs to the heat shock protein 90 family.</text>
</comment>